<organism>
    <name type="scientific">Tityus obscurus</name>
    <name type="common">Amazonian scorpion</name>
    <name type="synonym">Tityus cambridgei</name>
    <dbReference type="NCBI Taxonomy" id="1221240"/>
    <lineage>
        <taxon>Eukaryota</taxon>
        <taxon>Metazoa</taxon>
        <taxon>Ecdysozoa</taxon>
        <taxon>Arthropoda</taxon>
        <taxon>Chelicerata</taxon>
        <taxon>Arachnida</taxon>
        <taxon>Scorpiones</taxon>
        <taxon>Buthida</taxon>
        <taxon>Buthoidea</taxon>
        <taxon>Buthidae</taxon>
        <taxon>Tityus</taxon>
    </lineage>
</organism>
<comment type="function">
    <text evidence="2 4">Helical wheel projections predict no hydrophobic face, suggesting a non-amphipathic peptide (Probable). Does not show antifungal activity (PubMed:27917162).</text>
</comment>
<comment type="subcellular location">
    <subcellularLocation>
        <location evidence="4">Secreted</location>
    </subcellularLocation>
</comment>
<comment type="tissue specificity">
    <text evidence="4">Expressed by the venom gland.</text>
</comment>
<proteinExistence type="evidence at protein level"/>
<reference evidence="5" key="1">
    <citation type="journal article" date="2016" name="Front. Microbiol.">
        <title>Activity of scorpion venom-derived antifungal peptides against planktonic cells of Candida spp. and Cryptococcus neoformans and Candida albicans biofilms.</title>
        <authorList>
            <person name="Guilhelmelli F."/>
            <person name="Vilela N."/>
            <person name="Smidt K.S."/>
            <person name="de Oliveira M.A."/>
            <person name="da Cunha Morales Alvares A."/>
            <person name="Rigonatto M.C."/>
            <person name="da Silva Costa P.H."/>
            <person name="Tavares A.H."/>
            <person name="de Freitas S.M."/>
            <person name="Nicola A.M."/>
            <person name="Franco O.L."/>
            <person name="Derengowski L.D."/>
            <person name="Schwartz E.F."/>
            <person name="Mortari M.R."/>
            <person name="Bocca A.L."/>
            <person name="Albuquerque P."/>
            <person name="Silva-Pereira I."/>
        </authorList>
    </citation>
    <scope>NUCLEOTIDE SEQUENCE [MRNA]</scope>
    <scope>SYNTHESIS OF 35-58</scope>
    <scope>PROBABLE AMIDATION AT LYS-58</scope>
    <source>
        <tissue>Venom gland</tissue>
    </source>
</reference>
<evidence type="ECO:0000255" key="1"/>
<evidence type="ECO:0000269" key="2">
    <source>
    </source>
</evidence>
<evidence type="ECO:0000303" key="3">
    <source>
    </source>
</evidence>
<evidence type="ECO:0000305" key="4">
    <source>
    </source>
</evidence>
<evidence type="ECO:0000312" key="5">
    <source>
        <dbReference type="EMBL" id="SBQ16532.1"/>
    </source>
</evidence>
<feature type="signal peptide" evidence="1">
    <location>
        <begin position="1"/>
        <end position="24"/>
    </location>
</feature>
<feature type="propeptide" id="PRO_0000454904" evidence="4">
    <location>
        <begin position="25"/>
        <end position="34"/>
    </location>
</feature>
<feature type="peptide" id="PRO_5008915588" description="Peptide ToAcP" evidence="4">
    <location>
        <begin position="35"/>
        <end position="58"/>
    </location>
</feature>
<feature type="propeptide" id="PRO_0000454905" evidence="4">
    <location>
        <begin position="59"/>
        <end position="65"/>
    </location>
</feature>
<feature type="modified residue" description="Alanine amide" evidence="4">
    <location>
        <position position="58"/>
    </location>
</feature>
<accession>A0A1D3IY23</accession>
<name>TOACP_TITOB</name>
<sequence>MKMKMIVVISILLIVFSLSSKAMSLEDEQESVQREEDDLLGFSEEDLKAIKEHRAKNAGRFDPAV</sequence>
<keyword id="KW-0027">Amidation</keyword>
<keyword id="KW-0964">Secreted</keyword>
<keyword id="KW-0732">Signal</keyword>
<protein>
    <recommendedName>
        <fullName evidence="3">Peptide ToAcP</fullName>
    </recommendedName>
</protein>
<dbReference type="EMBL" id="LT576031">
    <property type="protein sequence ID" value="SBQ16532.1"/>
    <property type="molecule type" value="mRNA"/>
</dbReference>
<dbReference type="GO" id="GO:0005576">
    <property type="term" value="C:extracellular region"/>
    <property type="evidence" value="ECO:0007669"/>
    <property type="project" value="UniProtKB-SubCell"/>
</dbReference>